<feature type="chain" id="PRO_0000319272" description="Formate-dependent phosphoribosylglycinamide formyltransferase">
    <location>
        <begin position="1"/>
        <end position="393"/>
    </location>
</feature>
<feature type="domain" description="ATP-grasp" evidence="1">
    <location>
        <begin position="119"/>
        <end position="308"/>
    </location>
</feature>
<feature type="binding site" evidence="1">
    <location>
        <begin position="22"/>
        <end position="23"/>
    </location>
    <ligand>
        <name>N(1)-(5-phospho-beta-D-ribosyl)glycinamide</name>
        <dbReference type="ChEBI" id="CHEBI:143788"/>
    </ligand>
</feature>
<feature type="binding site" evidence="1">
    <location>
        <position position="82"/>
    </location>
    <ligand>
        <name>N(1)-(5-phospho-beta-D-ribosyl)glycinamide</name>
        <dbReference type="ChEBI" id="CHEBI:143788"/>
    </ligand>
</feature>
<feature type="binding site" evidence="1">
    <location>
        <position position="114"/>
    </location>
    <ligand>
        <name>ATP</name>
        <dbReference type="ChEBI" id="CHEBI:30616"/>
    </ligand>
</feature>
<feature type="binding site" evidence="1">
    <location>
        <position position="155"/>
    </location>
    <ligand>
        <name>ATP</name>
        <dbReference type="ChEBI" id="CHEBI:30616"/>
    </ligand>
</feature>
<feature type="binding site" evidence="1">
    <location>
        <begin position="160"/>
        <end position="165"/>
    </location>
    <ligand>
        <name>ATP</name>
        <dbReference type="ChEBI" id="CHEBI:30616"/>
    </ligand>
</feature>
<feature type="binding site" evidence="1">
    <location>
        <begin position="195"/>
        <end position="198"/>
    </location>
    <ligand>
        <name>ATP</name>
        <dbReference type="ChEBI" id="CHEBI:30616"/>
    </ligand>
</feature>
<feature type="binding site" evidence="1">
    <location>
        <position position="203"/>
    </location>
    <ligand>
        <name>ATP</name>
        <dbReference type="ChEBI" id="CHEBI:30616"/>
    </ligand>
</feature>
<feature type="binding site" evidence="1">
    <location>
        <position position="267"/>
    </location>
    <ligand>
        <name>Mg(2+)</name>
        <dbReference type="ChEBI" id="CHEBI:18420"/>
    </ligand>
</feature>
<feature type="binding site" evidence="1">
    <location>
        <position position="279"/>
    </location>
    <ligand>
        <name>Mg(2+)</name>
        <dbReference type="ChEBI" id="CHEBI:18420"/>
    </ligand>
</feature>
<feature type="binding site" evidence="1">
    <location>
        <position position="286"/>
    </location>
    <ligand>
        <name>N(1)-(5-phospho-beta-D-ribosyl)glycinamide</name>
        <dbReference type="ChEBI" id="CHEBI:143788"/>
    </ligand>
</feature>
<feature type="binding site" evidence="1">
    <location>
        <position position="355"/>
    </location>
    <ligand>
        <name>N(1)-(5-phospho-beta-D-ribosyl)glycinamide</name>
        <dbReference type="ChEBI" id="CHEBI:143788"/>
    </ligand>
</feature>
<feature type="binding site" evidence="1">
    <location>
        <begin position="362"/>
        <end position="363"/>
    </location>
    <ligand>
        <name>N(1)-(5-phospho-beta-D-ribosyl)glycinamide</name>
        <dbReference type="ChEBI" id="CHEBI:143788"/>
    </ligand>
</feature>
<name>PURT_YERPA</name>
<keyword id="KW-0067">ATP-binding</keyword>
<keyword id="KW-0436">Ligase</keyword>
<keyword id="KW-0460">Magnesium</keyword>
<keyword id="KW-0479">Metal-binding</keyword>
<keyword id="KW-0547">Nucleotide-binding</keyword>
<keyword id="KW-0658">Purine biosynthesis</keyword>
<evidence type="ECO:0000255" key="1">
    <source>
        <dbReference type="HAMAP-Rule" id="MF_01643"/>
    </source>
</evidence>
<protein>
    <recommendedName>
        <fullName evidence="1">Formate-dependent phosphoribosylglycinamide formyltransferase</fullName>
        <ecNumber evidence="1">6.3.1.21</ecNumber>
    </recommendedName>
    <alternativeName>
        <fullName evidence="1">5'-phosphoribosylglycinamide transformylase 2</fullName>
    </alternativeName>
    <alternativeName>
        <fullName evidence="1">Formate-dependent GAR transformylase</fullName>
    </alternativeName>
    <alternativeName>
        <fullName evidence="1">GAR transformylase 2</fullName>
        <shortName evidence="1">GART 2</shortName>
    </alternativeName>
    <alternativeName>
        <fullName evidence="1">Non-folate glycinamide ribonucleotide transformylase</fullName>
    </alternativeName>
    <alternativeName>
        <fullName evidence="1">Phosphoribosylglycinamide formyltransferase 2</fullName>
    </alternativeName>
</protein>
<reference key="1">
    <citation type="journal article" date="2006" name="J. Bacteriol.">
        <title>Complete genome sequence of Yersinia pestis strains Antiqua and Nepal516: evidence of gene reduction in an emerging pathogen.</title>
        <authorList>
            <person name="Chain P.S.G."/>
            <person name="Hu P."/>
            <person name="Malfatti S.A."/>
            <person name="Radnedge L."/>
            <person name="Larimer F."/>
            <person name="Vergez L.M."/>
            <person name="Worsham P."/>
            <person name="Chu M.C."/>
            <person name="Andersen G.L."/>
        </authorList>
    </citation>
    <scope>NUCLEOTIDE SEQUENCE [LARGE SCALE GENOMIC DNA]</scope>
    <source>
        <strain>Antiqua</strain>
    </source>
</reference>
<gene>
    <name evidence="1" type="primary">purT</name>
    <name type="ordered locus">YPA_1147</name>
</gene>
<organism>
    <name type="scientific">Yersinia pestis bv. Antiqua (strain Antiqua)</name>
    <dbReference type="NCBI Taxonomy" id="360102"/>
    <lineage>
        <taxon>Bacteria</taxon>
        <taxon>Pseudomonadati</taxon>
        <taxon>Pseudomonadota</taxon>
        <taxon>Gammaproteobacteria</taxon>
        <taxon>Enterobacterales</taxon>
        <taxon>Yersiniaceae</taxon>
        <taxon>Yersinia</taxon>
    </lineage>
</organism>
<proteinExistence type="inferred from homology"/>
<comment type="function">
    <text evidence="1">Involved in the de novo purine biosynthesis. Catalyzes the transfer of formate to 5-phospho-ribosyl-glycinamide (GAR), producing 5-phospho-ribosyl-N-formylglycinamide (FGAR). Formate is provided by PurU via hydrolysis of 10-formyl-tetrahydrofolate.</text>
</comment>
<comment type="catalytic activity">
    <reaction evidence="1">
        <text>N(1)-(5-phospho-beta-D-ribosyl)glycinamide + formate + ATP = N(2)-formyl-N(1)-(5-phospho-beta-D-ribosyl)glycinamide + ADP + phosphate + H(+)</text>
        <dbReference type="Rhea" id="RHEA:24829"/>
        <dbReference type="ChEBI" id="CHEBI:15378"/>
        <dbReference type="ChEBI" id="CHEBI:15740"/>
        <dbReference type="ChEBI" id="CHEBI:30616"/>
        <dbReference type="ChEBI" id="CHEBI:43474"/>
        <dbReference type="ChEBI" id="CHEBI:143788"/>
        <dbReference type="ChEBI" id="CHEBI:147286"/>
        <dbReference type="ChEBI" id="CHEBI:456216"/>
        <dbReference type="EC" id="6.3.1.21"/>
    </reaction>
    <physiologicalReaction direction="left-to-right" evidence="1">
        <dbReference type="Rhea" id="RHEA:24830"/>
    </physiologicalReaction>
</comment>
<comment type="pathway">
    <text evidence="1">Purine metabolism; IMP biosynthesis via de novo pathway; N(2)-formyl-N(1)-(5-phospho-D-ribosyl)glycinamide from N(1)-(5-phospho-D-ribosyl)glycinamide (formate route): step 1/1.</text>
</comment>
<comment type="subunit">
    <text evidence="1">Homodimer.</text>
</comment>
<comment type="similarity">
    <text evidence="1">Belongs to the PurK/PurT family.</text>
</comment>
<dbReference type="EC" id="6.3.1.21" evidence="1"/>
<dbReference type="EMBL" id="CP000308">
    <property type="protein sequence ID" value="ABG13114.1"/>
    <property type="molecule type" value="Genomic_DNA"/>
</dbReference>
<dbReference type="RefSeq" id="WP_002211083.1">
    <property type="nucleotide sequence ID" value="NZ_CP009906.1"/>
</dbReference>
<dbReference type="SMR" id="Q1C8V8"/>
<dbReference type="GeneID" id="57976805"/>
<dbReference type="KEGG" id="ypa:YPA_1147"/>
<dbReference type="UniPathway" id="UPA00074">
    <property type="reaction ID" value="UER00127"/>
</dbReference>
<dbReference type="Proteomes" id="UP000001971">
    <property type="component" value="Chromosome"/>
</dbReference>
<dbReference type="GO" id="GO:0005829">
    <property type="term" value="C:cytosol"/>
    <property type="evidence" value="ECO:0007669"/>
    <property type="project" value="TreeGrafter"/>
</dbReference>
<dbReference type="GO" id="GO:0005524">
    <property type="term" value="F:ATP binding"/>
    <property type="evidence" value="ECO:0007669"/>
    <property type="project" value="UniProtKB-UniRule"/>
</dbReference>
<dbReference type="GO" id="GO:0000287">
    <property type="term" value="F:magnesium ion binding"/>
    <property type="evidence" value="ECO:0007669"/>
    <property type="project" value="InterPro"/>
</dbReference>
<dbReference type="GO" id="GO:0043815">
    <property type="term" value="F:phosphoribosylglycinamide formyltransferase 2 activity"/>
    <property type="evidence" value="ECO:0007669"/>
    <property type="project" value="UniProtKB-UniRule"/>
</dbReference>
<dbReference type="GO" id="GO:0004644">
    <property type="term" value="F:phosphoribosylglycinamide formyltransferase activity"/>
    <property type="evidence" value="ECO:0007669"/>
    <property type="project" value="InterPro"/>
</dbReference>
<dbReference type="GO" id="GO:0006189">
    <property type="term" value="P:'de novo' IMP biosynthetic process"/>
    <property type="evidence" value="ECO:0007669"/>
    <property type="project" value="UniProtKB-UniRule"/>
</dbReference>
<dbReference type="FunFam" id="3.30.1490.20:FF:000013">
    <property type="entry name" value="Formate-dependent phosphoribosylglycinamide formyltransferase"/>
    <property type="match status" value="1"/>
</dbReference>
<dbReference type="FunFam" id="3.30.470.20:FF:000027">
    <property type="entry name" value="Formate-dependent phosphoribosylglycinamide formyltransferase"/>
    <property type="match status" value="1"/>
</dbReference>
<dbReference type="FunFam" id="3.40.50.20:FF:000007">
    <property type="entry name" value="Formate-dependent phosphoribosylglycinamide formyltransferase"/>
    <property type="match status" value="1"/>
</dbReference>
<dbReference type="Gene3D" id="3.40.50.20">
    <property type="match status" value="1"/>
</dbReference>
<dbReference type="Gene3D" id="3.30.1490.20">
    <property type="entry name" value="ATP-grasp fold, A domain"/>
    <property type="match status" value="1"/>
</dbReference>
<dbReference type="Gene3D" id="3.30.470.20">
    <property type="entry name" value="ATP-grasp fold, B domain"/>
    <property type="match status" value="1"/>
</dbReference>
<dbReference type="HAMAP" id="MF_01643">
    <property type="entry name" value="PurT"/>
    <property type="match status" value="1"/>
</dbReference>
<dbReference type="InterPro" id="IPR011761">
    <property type="entry name" value="ATP-grasp"/>
</dbReference>
<dbReference type="InterPro" id="IPR003135">
    <property type="entry name" value="ATP-grasp_carboxylate-amine"/>
</dbReference>
<dbReference type="InterPro" id="IPR013815">
    <property type="entry name" value="ATP_grasp_subdomain_1"/>
</dbReference>
<dbReference type="InterPro" id="IPR016185">
    <property type="entry name" value="PreATP-grasp_dom_sf"/>
</dbReference>
<dbReference type="InterPro" id="IPR005862">
    <property type="entry name" value="PurT"/>
</dbReference>
<dbReference type="InterPro" id="IPR054350">
    <property type="entry name" value="PurT/PurK_preATP-grasp"/>
</dbReference>
<dbReference type="InterPro" id="IPR048740">
    <property type="entry name" value="PurT_C"/>
</dbReference>
<dbReference type="InterPro" id="IPR011054">
    <property type="entry name" value="Rudment_hybrid_motif"/>
</dbReference>
<dbReference type="NCBIfam" id="NF006766">
    <property type="entry name" value="PRK09288.1"/>
    <property type="match status" value="1"/>
</dbReference>
<dbReference type="NCBIfam" id="TIGR01142">
    <property type="entry name" value="purT"/>
    <property type="match status" value="1"/>
</dbReference>
<dbReference type="PANTHER" id="PTHR43055">
    <property type="entry name" value="FORMATE-DEPENDENT PHOSPHORIBOSYLGLYCINAMIDE FORMYLTRANSFERASE"/>
    <property type="match status" value="1"/>
</dbReference>
<dbReference type="PANTHER" id="PTHR43055:SF1">
    <property type="entry name" value="FORMATE-DEPENDENT PHOSPHORIBOSYLGLYCINAMIDE FORMYLTRANSFERASE"/>
    <property type="match status" value="1"/>
</dbReference>
<dbReference type="Pfam" id="PF02222">
    <property type="entry name" value="ATP-grasp"/>
    <property type="match status" value="1"/>
</dbReference>
<dbReference type="Pfam" id="PF21244">
    <property type="entry name" value="PurT_C"/>
    <property type="match status" value="1"/>
</dbReference>
<dbReference type="Pfam" id="PF22660">
    <property type="entry name" value="RS_preATP-grasp-like"/>
    <property type="match status" value="1"/>
</dbReference>
<dbReference type="SUPFAM" id="SSF56059">
    <property type="entry name" value="Glutathione synthetase ATP-binding domain-like"/>
    <property type="match status" value="1"/>
</dbReference>
<dbReference type="SUPFAM" id="SSF52440">
    <property type="entry name" value="PreATP-grasp domain"/>
    <property type="match status" value="1"/>
</dbReference>
<dbReference type="SUPFAM" id="SSF51246">
    <property type="entry name" value="Rudiment single hybrid motif"/>
    <property type="match status" value="1"/>
</dbReference>
<dbReference type="PROSITE" id="PS50975">
    <property type="entry name" value="ATP_GRASP"/>
    <property type="match status" value="1"/>
</dbReference>
<sequence>MLTIGTALRPGATRVMLLGAGELGKEVAIECQRLGLEVIAVDRYADAPAMHVAHRSHVINMLDGAALKQLVAQEKPHYIVPEIEAIATDMLVELEKMGQHVVPCAEATRLTMNREGIRRLAAETLQLPTSSYRFADTDSAFFQAVRDIGYPCIVKPVMSSSGKGQSLIRSEEHLQAAWEYAQQGGRAGSGRVIIEGLVHFDFEITLLTIRAVDGIHFCAPIGHRQEDGDYRESWQPQAMSDIALQRAKEISAQVVTALGGFGLFGVELFVCGDDVIFSEVSPRPHDTGMVTLISQNMSEFALHVRAFLGLPIGTIRQYGAAASAVILPELTSQNITYRGLETALIGDTQIRLFGKPEIAGKRRLGVALAVADNIETAIEVAKKAAGNIEVSGE</sequence>
<accession>Q1C8V8</accession>